<gene>
    <name evidence="1" type="primary">leuS</name>
    <name type="ordered locus">LBA1617</name>
</gene>
<organism>
    <name type="scientific">Lactobacillus acidophilus (strain ATCC 700396 / NCK56 / N2 / NCFM)</name>
    <dbReference type="NCBI Taxonomy" id="272621"/>
    <lineage>
        <taxon>Bacteria</taxon>
        <taxon>Bacillati</taxon>
        <taxon>Bacillota</taxon>
        <taxon>Bacilli</taxon>
        <taxon>Lactobacillales</taxon>
        <taxon>Lactobacillaceae</taxon>
        <taxon>Lactobacillus</taxon>
    </lineage>
</organism>
<name>SYL_LACAC</name>
<proteinExistence type="inferred from homology"/>
<dbReference type="EC" id="6.1.1.4" evidence="1"/>
<dbReference type="EMBL" id="CP000033">
    <property type="protein sequence ID" value="AAV43431.1"/>
    <property type="molecule type" value="Genomic_DNA"/>
</dbReference>
<dbReference type="RefSeq" id="WP_003548508.1">
    <property type="nucleotide sequence ID" value="NC_006814.3"/>
</dbReference>
<dbReference type="RefSeq" id="YP_194462.1">
    <property type="nucleotide sequence ID" value="NC_006814.3"/>
</dbReference>
<dbReference type="SMR" id="Q5FIP3"/>
<dbReference type="STRING" id="272621.LBA1617"/>
<dbReference type="GeneID" id="93289320"/>
<dbReference type="KEGG" id="lac:LBA1617"/>
<dbReference type="PATRIC" id="fig|272621.13.peg.1537"/>
<dbReference type="eggNOG" id="COG0495">
    <property type="taxonomic scope" value="Bacteria"/>
</dbReference>
<dbReference type="HOGENOM" id="CLU_004427_0_0_9"/>
<dbReference type="OrthoDB" id="9810365at2"/>
<dbReference type="BioCyc" id="LACI272621:G1G49-1579-MONOMER"/>
<dbReference type="Proteomes" id="UP000006381">
    <property type="component" value="Chromosome"/>
</dbReference>
<dbReference type="GO" id="GO:0005829">
    <property type="term" value="C:cytosol"/>
    <property type="evidence" value="ECO:0007669"/>
    <property type="project" value="TreeGrafter"/>
</dbReference>
<dbReference type="GO" id="GO:0002161">
    <property type="term" value="F:aminoacyl-tRNA deacylase activity"/>
    <property type="evidence" value="ECO:0007669"/>
    <property type="project" value="InterPro"/>
</dbReference>
<dbReference type="GO" id="GO:0005524">
    <property type="term" value="F:ATP binding"/>
    <property type="evidence" value="ECO:0007669"/>
    <property type="project" value="UniProtKB-UniRule"/>
</dbReference>
<dbReference type="GO" id="GO:0004823">
    <property type="term" value="F:leucine-tRNA ligase activity"/>
    <property type="evidence" value="ECO:0007669"/>
    <property type="project" value="UniProtKB-UniRule"/>
</dbReference>
<dbReference type="GO" id="GO:0006429">
    <property type="term" value="P:leucyl-tRNA aminoacylation"/>
    <property type="evidence" value="ECO:0007669"/>
    <property type="project" value="UniProtKB-UniRule"/>
</dbReference>
<dbReference type="CDD" id="cd07958">
    <property type="entry name" value="Anticodon_Ia_Leu_BEm"/>
    <property type="match status" value="1"/>
</dbReference>
<dbReference type="CDD" id="cd00812">
    <property type="entry name" value="LeuRS_core"/>
    <property type="match status" value="1"/>
</dbReference>
<dbReference type="FunFam" id="3.10.20.590:FF:000001">
    <property type="entry name" value="Leucine--tRNA ligase"/>
    <property type="match status" value="1"/>
</dbReference>
<dbReference type="FunFam" id="3.40.50.620:FF:000056">
    <property type="entry name" value="Leucine--tRNA ligase"/>
    <property type="match status" value="1"/>
</dbReference>
<dbReference type="FunFam" id="3.40.50.620:FF:000077">
    <property type="entry name" value="Leucine--tRNA ligase"/>
    <property type="match status" value="1"/>
</dbReference>
<dbReference type="FunFam" id="1.10.730.10:FF:000011">
    <property type="entry name" value="Leucine--tRNA ligase chloroplastic/mitochondrial"/>
    <property type="match status" value="1"/>
</dbReference>
<dbReference type="Gene3D" id="3.10.20.590">
    <property type="match status" value="1"/>
</dbReference>
<dbReference type="Gene3D" id="3.40.50.620">
    <property type="entry name" value="HUPs"/>
    <property type="match status" value="2"/>
</dbReference>
<dbReference type="Gene3D" id="1.10.730.10">
    <property type="entry name" value="Isoleucyl-tRNA Synthetase, Domain 1"/>
    <property type="match status" value="1"/>
</dbReference>
<dbReference type="HAMAP" id="MF_00049_B">
    <property type="entry name" value="Leu_tRNA_synth_B"/>
    <property type="match status" value="1"/>
</dbReference>
<dbReference type="InterPro" id="IPR001412">
    <property type="entry name" value="aa-tRNA-synth_I_CS"/>
</dbReference>
<dbReference type="InterPro" id="IPR002300">
    <property type="entry name" value="aa-tRNA-synth_Ia"/>
</dbReference>
<dbReference type="InterPro" id="IPR002302">
    <property type="entry name" value="Leu-tRNA-ligase"/>
</dbReference>
<dbReference type="InterPro" id="IPR025709">
    <property type="entry name" value="Leu_tRNA-synth_edit"/>
</dbReference>
<dbReference type="InterPro" id="IPR013155">
    <property type="entry name" value="M/V/L/I-tRNA-synth_anticd-bd"/>
</dbReference>
<dbReference type="InterPro" id="IPR015413">
    <property type="entry name" value="Methionyl/Leucyl_tRNA_Synth"/>
</dbReference>
<dbReference type="InterPro" id="IPR014729">
    <property type="entry name" value="Rossmann-like_a/b/a_fold"/>
</dbReference>
<dbReference type="InterPro" id="IPR009080">
    <property type="entry name" value="tRNAsynth_Ia_anticodon-bd"/>
</dbReference>
<dbReference type="InterPro" id="IPR009008">
    <property type="entry name" value="Val/Leu/Ile-tRNA-synth_edit"/>
</dbReference>
<dbReference type="NCBIfam" id="TIGR00396">
    <property type="entry name" value="leuS_bact"/>
    <property type="match status" value="1"/>
</dbReference>
<dbReference type="PANTHER" id="PTHR43740:SF2">
    <property type="entry name" value="LEUCINE--TRNA LIGASE, MITOCHONDRIAL"/>
    <property type="match status" value="1"/>
</dbReference>
<dbReference type="PANTHER" id="PTHR43740">
    <property type="entry name" value="LEUCYL-TRNA SYNTHETASE"/>
    <property type="match status" value="1"/>
</dbReference>
<dbReference type="Pfam" id="PF08264">
    <property type="entry name" value="Anticodon_1"/>
    <property type="match status" value="1"/>
</dbReference>
<dbReference type="Pfam" id="PF00133">
    <property type="entry name" value="tRNA-synt_1"/>
    <property type="match status" value="1"/>
</dbReference>
<dbReference type="Pfam" id="PF13603">
    <property type="entry name" value="tRNA-synt_1_2"/>
    <property type="match status" value="1"/>
</dbReference>
<dbReference type="Pfam" id="PF09334">
    <property type="entry name" value="tRNA-synt_1g"/>
    <property type="match status" value="1"/>
</dbReference>
<dbReference type="PRINTS" id="PR00985">
    <property type="entry name" value="TRNASYNTHLEU"/>
</dbReference>
<dbReference type="SUPFAM" id="SSF47323">
    <property type="entry name" value="Anticodon-binding domain of a subclass of class I aminoacyl-tRNA synthetases"/>
    <property type="match status" value="1"/>
</dbReference>
<dbReference type="SUPFAM" id="SSF52374">
    <property type="entry name" value="Nucleotidylyl transferase"/>
    <property type="match status" value="1"/>
</dbReference>
<dbReference type="SUPFAM" id="SSF50677">
    <property type="entry name" value="ValRS/IleRS/LeuRS editing domain"/>
    <property type="match status" value="1"/>
</dbReference>
<dbReference type="PROSITE" id="PS00178">
    <property type="entry name" value="AA_TRNA_LIGASE_I"/>
    <property type="match status" value="1"/>
</dbReference>
<keyword id="KW-0030">Aminoacyl-tRNA synthetase</keyword>
<keyword id="KW-0067">ATP-binding</keyword>
<keyword id="KW-0963">Cytoplasm</keyword>
<keyword id="KW-0436">Ligase</keyword>
<keyword id="KW-0547">Nucleotide-binding</keyword>
<keyword id="KW-0648">Protein biosynthesis</keyword>
<keyword id="KW-1185">Reference proteome</keyword>
<comment type="catalytic activity">
    <reaction evidence="1">
        <text>tRNA(Leu) + L-leucine + ATP = L-leucyl-tRNA(Leu) + AMP + diphosphate</text>
        <dbReference type="Rhea" id="RHEA:11688"/>
        <dbReference type="Rhea" id="RHEA-COMP:9613"/>
        <dbReference type="Rhea" id="RHEA-COMP:9622"/>
        <dbReference type="ChEBI" id="CHEBI:30616"/>
        <dbReference type="ChEBI" id="CHEBI:33019"/>
        <dbReference type="ChEBI" id="CHEBI:57427"/>
        <dbReference type="ChEBI" id="CHEBI:78442"/>
        <dbReference type="ChEBI" id="CHEBI:78494"/>
        <dbReference type="ChEBI" id="CHEBI:456215"/>
        <dbReference type="EC" id="6.1.1.4"/>
    </reaction>
</comment>
<comment type="subcellular location">
    <subcellularLocation>
        <location evidence="1">Cytoplasm</location>
    </subcellularLocation>
</comment>
<comment type="similarity">
    <text evidence="1">Belongs to the class-I aminoacyl-tRNA synthetase family.</text>
</comment>
<evidence type="ECO:0000255" key="1">
    <source>
        <dbReference type="HAMAP-Rule" id="MF_00049"/>
    </source>
</evidence>
<sequence length="804" mass="92469">MYNHKVVEKKWQDYWAKHDTFKTGTDSNKKNYYALDMFPFPSGKGLHVGHPEGYTATDIVSRMKRAQGYNVLHPMGWDAFGLPTEQYALKTGEDPEVVTKNNIANFKRQLNKLGFSYDWDREVTTSDPNYYKWTQWVFEQMYKKGLAYEAEVPVNWSPDLGTVVANEEIVDGKTERGGYPVYRRNMRQWMLKMTAYADRLLEDLDDLDWPEPVKEMQRNWIGRSLGAQVTFKIKDSDKTFDIFTTRPDTLFGCSYTVLAPENKLVQEITTDAQRDEVNAYIKKIESKSDLERTDLNKDKTGVFTGAYAINPVNGKEVPIWISDYVLASYGTGAVMAVPAHDERDYAFATKFGLPINPVLEGGDITKEAFTEDGPHINSEFLNGLNIKDAKKKMVEWLEEHNCGEKKVNYKLRDWDFSRQRYWGEPIPVIHWEDGETTLVPEDQLPLRLPHATDIKPSGTPESPLANLTDWVNVVDENGRKGKRETNTMPNWAGSSWYYLRYVDPHNDKELADYDLLKKWLPVDLYIGGAEHAVRHLLYARFWHKVLYDLGVVPTKEPFQRLYNQGLILKNHEKMSKSKGNVVNPDDVIDEYGADSLRMYEMFMGPLDASIDWDDNGPASTKKFLDRVWRLFVNDLDLKAIPQERIVDENDGELDKVYAETVKKVTEDFDALHFNTAISQMMVFMNAAQKAKTIPREYAEGFVKLLAPVAPHMMEEIWQVFGHDESISYAEWSTYDPAKLVESTVEIMVQVNGKLRGKFQAAKDADRDEVQKQAMELPHVQKFLEGKDVKKVIVVPNKIVNIVAK</sequence>
<protein>
    <recommendedName>
        <fullName evidence="1">Leucine--tRNA ligase</fullName>
        <ecNumber evidence="1">6.1.1.4</ecNumber>
    </recommendedName>
    <alternativeName>
        <fullName evidence="1">Leucyl-tRNA synthetase</fullName>
        <shortName evidence="1">LeuRS</shortName>
    </alternativeName>
</protein>
<accession>Q5FIP3</accession>
<reference key="1">
    <citation type="journal article" date="2005" name="Proc. Natl. Acad. Sci. U.S.A.">
        <title>Complete genome sequence of the probiotic lactic acid bacterium Lactobacillus acidophilus NCFM.</title>
        <authorList>
            <person name="Altermann E."/>
            <person name="Russell W.M."/>
            <person name="Azcarate-Peril M.A."/>
            <person name="Barrangou R."/>
            <person name="Buck B.L."/>
            <person name="McAuliffe O."/>
            <person name="Souther N."/>
            <person name="Dobson A."/>
            <person name="Duong T."/>
            <person name="Callanan M."/>
            <person name="Lick S."/>
            <person name="Hamrick A."/>
            <person name="Cano R."/>
            <person name="Klaenhammer T.R."/>
        </authorList>
    </citation>
    <scope>NUCLEOTIDE SEQUENCE [LARGE SCALE GENOMIC DNA]</scope>
    <source>
        <strain>ATCC 700396 / NCK56 / N2 / NCFM</strain>
    </source>
</reference>
<feature type="chain" id="PRO_1000091324" description="Leucine--tRNA ligase">
    <location>
        <begin position="1"/>
        <end position="804"/>
    </location>
</feature>
<feature type="short sequence motif" description="'HIGH' region">
    <location>
        <begin position="39"/>
        <end position="50"/>
    </location>
</feature>
<feature type="short sequence motif" description="'KMSKS' region">
    <location>
        <begin position="573"/>
        <end position="577"/>
    </location>
</feature>
<feature type="binding site" evidence="1">
    <location>
        <position position="576"/>
    </location>
    <ligand>
        <name>ATP</name>
        <dbReference type="ChEBI" id="CHEBI:30616"/>
    </ligand>
</feature>